<reference key="1">
    <citation type="journal article" date="1990" name="Genes Dev.">
        <title>The orthodenticle gene encodes a novel homeo domain protein involved in the development of the Drosophila nervous system and ocellar visual structures.</title>
        <authorList>
            <person name="Finkelstein R."/>
            <person name="Smouse D."/>
            <person name="Capaci T.M."/>
            <person name="Spradling A.C."/>
            <person name="Perrimon N."/>
        </authorList>
    </citation>
    <scope>NUCLEOTIDE SEQUENCE [MRNA]</scope>
    <scope>FUNCTION</scope>
    <scope>TISSUE SPECIFICITY</scope>
    <scope>DEVELOPMENTAL STAGE</scope>
    <scope>DISRUPTION PHENOTYPE</scope>
    <source>
        <tissue>Embryo</tissue>
    </source>
</reference>
<reference key="2">
    <citation type="journal article" date="2000" name="Science">
        <title>The genome sequence of Drosophila melanogaster.</title>
        <authorList>
            <person name="Adams M.D."/>
            <person name="Celniker S.E."/>
            <person name="Holt R.A."/>
            <person name="Evans C.A."/>
            <person name="Gocayne J.D."/>
            <person name="Amanatides P.G."/>
            <person name="Scherer S.E."/>
            <person name="Li P.W."/>
            <person name="Hoskins R.A."/>
            <person name="Galle R.F."/>
            <person name="George R.A."/>
            <person name="Lewis S.E."/>
            <person name="Richards S."/>
            <person name="Ashburner M."/>
            <person name="Henderson S.N."/>
            <person name="Sutton G.G."/>
            <person name="Wortman J.R."/>
            <person name="Yandell M.D."/>
            <person name="Zhang Q."/>
            <person name="Chen L.X."/>
            <person name="Brandon R.C."/>
            <person name="Rogers Y.-H.C."/>
            <person name="Blazej R.G."/>
            <person name="Champe M."/>
            <person name="Pfeiffer B.D."/>
            <person name="Wan K.H."/>
            <person name="Doyle C."/>
            <person name="Baxter E.G."/>
            <person name="Helt G."/>
            <person name="Nelson C.R."/>
            <person name="Miklos G.L.G."/>
            <person name="Abril J.F."/>
            <person name="Agbayani A."/>
            <person name="An H.-J."/>
            <person name="Andrews-Pfannkoch C."/>
            <person name="Baldwin D."/>
            <person name="Ballew R.M."/>
            <person name="Basu A."/>
            <person name="Baxendale J."/>
            <person name="Bayraktaroglu L."/>
            <person name="Beasley E.M."/>
            <person name="Beeson K.Y."/>
            <person name="Benos P.V."/>
            <person name="Berman B.P."/>
            <person name="Bhandari D."/>
            <person name="Bolshakov S."/>
            <person name="Borkova D."/>
            <person name="Botchan M.R."/>
            <person name="Bouck J."/>
            <person name="Brokstein P."/>
            <person name="Brottier P."/>
            <person name="Burtis K.C."/>
            <person name="Busam D.A."/>
            <person name="Butler H."/>
            <person name="Cadieu E."/>
            <person name="Center A."/>
            <person name="Chandra I."/>
            <person name="Cherry J.M."/>
            <person name="Cawley S."/>
            <person name="Dahlke C."/>
            <person name="Davenport L.B."/>
            <person name="Davies P."/>
            <person name="de Pablos B."/>
            <person name="Delcher A."/>
            <person name="Deng Z."/>
            <person name="Mays A.D."/>
            <person name="Dew I."/>
            <person name="Dietz S.M."/>
            <person name="Dodson K."/>
            <person name="Doup L.E."/>
            <person name="Downes M."/>
            <person name="Dugan-Rocha S."/>
            <person name="Dunkov B.C."/>
            <person name="Dunn P."/>
            <person name="Durbin K.J."/>
            <person name="Evangelista C.C."/>
            <person name="Ferraz C."/>
            <person name="Ferriera S."/>
            <person name="Fleischmann W."/>
            <person name="Fosler C."/>
            <person name="Gabrielian A.E."/>
            <person name="Garg N.S."/>
            <person name="Gelbart W.M."/>
            <person name="Glasser K."/>
            <person name="Glodek A."/>
            <person name="Gong F."/>
            <person name="Gorrell J.H."/>
            <person name="Gu Z."/>
            <person name="Guan P."/>
            <person name="Harris M."/>
            <person name="Harris N.L."/>
            <person name="Harvey D.A."/>
            <person name="Heiman T.J."/>
            <person name="Hernandez J.R."/>
            <person name="Houck J."/>
            <person name="Hostin D."/>
            <person name="Houston K.A."/>
            <person name="Howland T.J."/>
            <person name="Wei M.-H."/>
            <person name="Ibegwam C."/>
            <person name="Jalali M."/>
            <person name="Kalush F."/>
            <person name="Karpen G.H."/>
            <person name="Ke Z."/>
            <person name="Kennison J.A."/>
            <person name="Ketchum K.A."/>
            <person name="Kimmel B.E."/>
            <person name="Kodira C.D."/>
            <person name="Kraft C.L."/>
            <person name="Kravitz S."/>
            <person name="Kulp D."/>
            <person name="Lai Z."/>
            <person name="Lasko P."/>
            <person name="Lei Y."/>
            <person name="Levitsky A.A."/>
            <person name="Li J.H."/>
            <person name="Li Z."/>
            <person name="Liang Y."/>
            <person name="Lin X."/>
            <person name="Liu X."/>
            <person name="Mattei B."/>
            <person name="McIntosh T.C."/>
            <person name="McLeod M.P."/>
            <person name="McPherson D."/>
            <person name="Merkulov G."/>
            <person name="Milshina N.V."/>
            <person name="Mobarry C."/>
            <person name="Morris J."/>
            <person name="Moshrefi A."/>
            <person name="Mount S.M."/>
            <person name="Moy M."/>
            <person name="Murphy B."/>
            <person name="Murphy L."/>
            <person name="Muzny D.M."/>
            <person name="Nelson D.L."/>
            <person name="Nelson D.R."/>
            <person name="Nelson K.A."/>
            <person name="Nixon K."/>
            <person name="Nusskern D.R."/>
            <person name="Pacleb J.M."/>
            <person name="Palazzolo M."/>
            <person name="Pittman G.S."/>
            <person name="Pan S."/>
            <person name="Pollard J."/>
            <person name="Puri V."/>
            <person name="Reese M.G."/>
            <person name="Reinert K."/>
            <person name="Remington K."/>
            <person name="Saunders R.D.C."/>
            <person name="Scheeler F."/>
            <person name="Shen H."/>
            <person name="Shue B.C."/>
            <person name="Siden-Kiamos I."/>
            <person name="Simpson M."/>
            <person name="Skupski M.P."/>
            <person name="Smith T.J."/>
            <person name="Spier E."/>
            <person name="Spradling A.C."/>
            <person name="Stapleton M."/>
            <person name="Strong R."/>
            <person name="Sun E."/>
            <person name="Svirskas R."/>
            <person name="Tector C."/>
            <person name="Turner R."/>
            <person name="Venter E."/>
            <person name="Wang A.H."/>
            <person name="Wang X."/>
            <person name="Wang Z.-Y."/>
            <person name="Wassarman D.A."/>
            <person name="Weinstock G.M."/>
            <person name="Weissenbach J."/>
            <person name="Williams S.M."/>
            <person name="Woodage T."/>
            <person name="Worley K.C."/>
            <person name="Wu D."/>
            <person name="Yang S."/>
            <person name="Yao Q.A."/>
            <person name="Ye J."/>
            <person name="Yeh R.-F."/>
            <person name="Zaveri J.S."/>
            <person name="Zhan M."/>
            <person name="Zhang G."/>
            <person name="Zhao Q."/>
            <person name="Zheng L."/>
            <person name="Zheng X.H."/>
            <person name="Zhong F.N."/>
            <person name="Zhong W."/>
            <person name="Zhou X."/>
            <person name="Zhu S.C."/>
            <person name="Zhu X."/>
            <person name="Smith H.O."/>
            <person name="Gibbs R.A."/>
            <person name="Myers E.W."/>
            <person name="Rubin G.M."/>
            <person name="Venter J.C."/>
        </authorList>
    </citation>
    <scope>NUCLEOTIDE SEQUENCE [LARGE SCALE GENOMIC DNA]</scope>
    <source>
        <strain>Berkeley</strain>
    </source>
</reference>
<reference key="3">
    <citation type="journal article" date="2002" name="Genome Biol.">
        <title>Annotation of the Drosophila melanogaster euchromatic genome: a systematic review.</title>
        <authorList>
            <person name="Misra S."/>
            <person name="Crosby M.A."/>
            <person name="Mungall C.J."/>
            <person name="Matthews B.B."/>
            <person name="Campbell K.S."/>
            <person name="Hradecky P."/>
            <person name="Huang Y."/>
            <person name="Kaminker J.S."/>
            <person name="Millburn G.H."/>
            <person name="Prochnik S.E."/>
            <person name="Smith C.D."/>
            <person name="Tupy J.L."/>
            <person name="Whitfield E.J."/>
            <person name="Bayraktaroglu L."/>
            <person name="Berman B.P."/>
            <person name="Bettencourt B.R."/>
            <person name="Celniker S.E."/>
            <person name="de Grey A.D.N.J."/>
            <person name="Drysdale R.A."/>
            <person name="Harris N.L."/>
            <person name="Richter J."/>
            <person name="Russo S."/>
            <person name="Schroeder A.J."/>
            <person name="Shu S.Q."/>
            <person name="Stapleton M."/>
            <person name="Yamada C."/>
            <person name="Ashburner M."/>
            <person name="Gelbart W.M."/>
            <person name="Rubin G.M."/>
            <person name="Lewis S.E."/>
        </authorList>
    </citation>
    <scope>GENOME REANNOTATION</scope>
    <source>
        <strain>Berkeley</strain>
    </source>
</reference>
<reference key="4">
    <citation type="submission" date="2004-01" db="EMBL/GenBank/DDBJ databases">
        <authorList>
            <person name="Stapleton M."/>
            <person name="Brokstein P."/>
            <person name="Hong L."/>
            <person name="Agbayani A."/>
            <person name="Carlson J.W."/>
            <person name="Champe M."/>
            <person name="Chavez C."/>
            <person name="Dorsett V."/>
            <person name="Dresnek D."/>
            <person name="Farfan D."/>
            <person name="Frise E."/>
            <person name="George R.A."/>
            <person name="Gonzalez M."/>
            <person name="Guarin H."/>
            <person name="Kronmiller B."/>
            <person name="Li P.W."/>
            <person name="Liao G."/>
            <person name="Miranda A."/>
            <person name="Mungall C.J."/>
            <person name="Nunoo J."/>
            <person name="Pacleb J.M."/>
            <person name="Paragas V."/>
            <person name="Park S."/>
            <person name="Patel S."/>
            <person name="Phouanenavong S."/>
            <person name="Wan K.H."/>
            <person name="Yu C."/>
            <person name="Lewis S.E."/>
            <person name="Rubin G.M."/>
            <person name="Celniker S.E."/>
        </authorList>
    </citation>
    <scope>NUCLEOTIDE SEQUENCE [LARGE SCALE MRNA]</scope>
    <source>
        <strain>Berkeley</strain>
        <tissue>Embryo</tissue>
    </source>
</reference>
<reference key="5">
    <citation type="journal article" date="1996" name="Dev. Biol.">
        <title>orthodenticle is required for photoreceptor cell development in the Drosophila eye.</title>
        <authorList>
            <person name="Vandendries E.R."/>
            <person name="Johnson D."/>
            <person name="Reinke R."/>
        </authorList>
    </citation>
    <scope>FUNCTION</scope>
    <scope>TISSUE SPECIFICITY</scope>
    <scope>DISRUPTION PHENOTYPE</scope>
</reference>
<reference key="6">
    <citation type="journal article" date="2003" name="Dev. Cell">
        <title>Otd/Crx, a dual regulator for the specification of ommatidia subtypes in the Drosophila retina.</title>
        <authorList>
            <person name="Tahayato A."/>
            <person name="Sonneville R."/>
            <person name="Pichaud F."/>
            <person name="Wernet M.F."/>
            <person name="Papatsenko D."/>
            <person name="Beaufils P."/>
            <person name="Cook T."/>
            <person name="Desplan C."/>
        </authorList>
    </citation>
    <scope>FUNCTION</scope>
    <scope>TISSUE SPECIFICITY</scope>
</reference>
<feature type="chain" id="PRO_0000049072" description="Homeotic protein ocelliless">
    <location>
        <begin position="1"/>
        <end position="542"/>
    </location>
</feature>
<feature type="DNA-binding region" description="Homeobox" evidence="1">
    <location>
        <begin position="67"/>
        <end position="126"/>
    </location>
</feature>
<feature type="region of interest" description="Disordered" evidence="2">
    <location>
        <begin position="1"/>
        <end position="40"/>
    </location>
</feature>
<feature type="region of interest" description="Disordered" evidence="2">
    <location>
        <begin position="124"/>
        <end position="209"/>
    </location>
</feature>
<feature type="region of interest" description="Disordered" evidence="2">
    <location>
        <begin position="243"/>
        <end position="278"/>
    </location>
</feature>
<feature type="region of interest" description="Disordered" evidence="2">
    <location>
        <begin position="392"/>
        <end position="441"/>
    </location>
</feature>
<feature type="compositionally biased region" description="Low complexity" evidence="2">
    <location>
        <begin position="11"/>
        <end position="21"/>
    </location>
</feature>
<feature type="compositionally biased region" description="Low complexity" evidence="2">
    <location>
        <begin position="124"/>
        <end position="141"/>
    </location>
</feature>
<feature type="compositionally biased region" description="Low complexity" evidence="2">
    <location>
        <begin position="148"/>
        <end position="194"/>
    </location>
</feature>
<feature type="compositionally biased region" description="Low complexity" evidence="2">
    <location>
        <begin position="243"/>
        <end position="267"/>
    </location>
</feature>
<feature type="compositionally biased region" description="Low complexity" evidence="2">
    <location>
        <begin position="406"/>
        <end position="417"/>
    </location>
</feature>
<feature type="compositionally biased region" description="Low complexity" evidence="2">
    <location>
        <begin position="425"/>
        <end position="441"/>
    </location>
</feature>
<feature type="sequence conflict" description="In Ref. 1; CAA41732." evidence="6" ref="1">
    <original>G</original>
    <variation>GDLCYPG</variation>
    <location>
        <position position="61"/>
    </location>
</feature>
<feature type="sequence conflict" description="In Ref. 1; CAA41732." evidence="6" ref="1">
    <original>A</original>
    <variation>ASAQSIKTHHSSFLSAAAA</variation>
    <location>
        <position position="240"/>
    </location>
</feature>
<feature type="sequence conflict" description="In Ref. 1; CAA41732." evidence="6" ref="1">
    <location>
        <begin position="272"/>
        <end position="273"/>
    </location>
</feature>
<feature type="sequence conflict" description="In Ref. 1; CAA41732." evidence="6" ref="1">
    <original>G</original>
    <variation>GGG</variation>
    <location>
        <position position="337"/>
    </location>
</feature>
<feature type="sequence conflict" description="In Ref. 1; CAA41732." evidence="6" ref="1">
    <location>
        <position position="434"/>
    </location>
</feature>
<feature type="sequence conflict" description="In Ref. 4; AAR88546." evidence="6" ref="4">
    <original>D</original>
    <variation>Y</variation>
    <location>
        <position position="530"/>
    </location>
</feature>
<name>HMOC_DROME</name>
<evidence type="ECO:0000255" key="1">
    <source>
        <dbReference type="PROSITE-ProRule" id="PRU00108"/>
    </source>
</evidence>
<evidence type="ECO:0000256" key="2">
    <source>
        <dbReference type="SAM" id="MobiDB-lite"/>
    </source>
</evidence>
<evidence type="ECO:0000269" key="3">
    <source>
    </source>
</evidence>
<evidence type="ECO:0000269" key="4">
    <source>
    </source>
</evidence>
<evidence type="ECO:0000269" key="5">
    <source>
    </source>
</evidence>
<evidence type="ECO:0000305" key="6"/>
<sequence length="542" mass="55187">MAAGFLKSGDLGPHPHSYGGPHPHHSVPHGPLPPGMPMPSLGPFGLPHGLEAVGFSQGMWGVNTRKQRRERTTFTRAQLDVLEALFGKTRYPDIFMREEVALKINLPESRVQVWFKNRRAKCRQQLQQQQQSNSLSSSKNASGGGSGNSCSSSSANSRSNSNNNGSSSNNNTQSSGGNNSNKSSQKQGNSQSSQQGGGSSGGNNSNNNSAAAAASAAAAVAAAQSIKTHHSSFLSAAAAAASGGTNQSANNNSNNNNQGNSTPNSSSSGGGGGSQAGGHLSAAAAAAALNVTAAHQNSSPLLPTPATSVSPVSIVCKKEHLSGGYGSSVGGGGGGGGASSGGLNLGVGVGVGVGVGVGVSQDLLRSPYDQLKDAGGDIGAGVHHHHSIYGSAAGSNPRLLQPGGNITPMDSSSSITTPSPPITPMSPQSAAAAAHAAQSAQSAHHSAAHSAAYMSNHDSYNFWHNQYQQYPNNYAQAPSYYSQMEYFSNQNQVNYNMGHSGYTASNFGLSPSPSFTGTVSAQAFSQNSLDYMSPQDKYANMV</sequence>
<dbReference type="EMBL" id="X58983">
    <property type="protein sequence ID" value="CAA41732.1"/>
    <property type="status" value="ALT_FRAME"/>
    <property type="molecule type" value="mRNA"/>
</dbReference>
<dbReference type="EMBL" id="AE014298">
    <property type="protein sequence ID" value="AAX52481.2"/>
    <property type="molecule type" value="Genomic_DNA"/>
</dbReference>
<dbReference type="EMBL" id="BT011185">
    <property type="protein sequence ID" value="AAR88546.1"/>
    <property type="molecule type" value="mRNA"/>
</dbReference>
<dbReference type="PIR" id="A35912">
    <property type="entry name" value="A35912"/>
</dbReference>
<dbReference type="RefSeq" id="NP_001014727.2">
    <property type="nucleotide sequence ID" value="NM_001014727.3"/>
</dbReference>
<dbReference type="RefSeq" id="NP_001259345.1">
    <property type="nucleotide sequence ID" value="NM_001272416.1"/>
</dbReference>
<dbReference type="RefSeq" id="NP_001259346.1">
    <property type="nucleotide sequence ID" value="NM_001272417.1"/>
</dbReference>
<dbReference type="SMR" id="P22810"/>
<dbReference type="BioGRID" id="58261">
    <property type="interactions" value="86"/>
</dbReference>
<dbReference type="FunCoup" id="P22810">
    <property type="interactions" value="262"/>
</dbReference>
<dbReference type="IntAct" id="P22810">
    <property type="interactions" value="74"/>
</dbReference>
<dbReference type="STRING" id="7227.FBpp0423136"/>
<dbReference type="GlyGen" id="P22810">
    <property type="glycosylation" value="1 site"/>
</dbReference>
<dbReference type="PaxDb" id="7227-FBpp0304126"/>
<dbReference type="EnsemblMetazoa" id="FBtr0300106">
    <property type="protein sequence ID" value="FBpp0289383"/>
    <property type="gene ID" value="FBgn0004102"/>
</dbReference>
<dbReference type="EnsemblMetazoa" id="FBtr0331305">
    <property type="protein sequence ID" value="FBpp0303737"/>
    <property type="gene ID" value="FBgn0004102"/>
</dbReference>
<dbReference type="EnsemblMetazoa" id="FBtr0331738">
    <property type="protein sequence ID" value="FBpp0304127"/>
    <property type="gene ID" value="FBgn0004102"/>
</dbReference>
<dbReference type="GeneID" id="31802"/>
<dbReference type="KEGG" id="dme:Dmel_CG12154"/>
<dbReference type="UCSC" id="CG12154-RC">
    <property type="organism name" value="d. melanogaster"/>
</dbReference>
<dbReference type="AGR" id="FB:FBgn0004102"/>
<dbReference type="CTD" id="31802"/>
<dbReference type="FlyBase" id="FBgn0004102">
    <property type="gene designation" value="oc"/>
</dbReference>
<dbReference type="VEuPathDB" id="VectorBase:FBgn0004102"/>
<dbReference type="eggNOG" id="KOG2251">
    <property type="taxonomic scope" value="Eukaryota"/>
</dbReference>
<dbReference type="GeneTree" id="ENSGT00940000167436"/>
<dbReference type="InParanoid" id="P22810"/>
<dbReference type="OMA" id="YPNNYNT"/>
<dbReference type="OrthoDB" id="6159439at2759"/>
<dbReference type="PhylomeDB" id="P22810"/>
<dbReference type="SignaLink" id="P22810"/>
<dbReference type="BioGRID-ORCS" id="31802">
    <property type="hits" value="0 hits in 3 CRISPR screens"/>
</dbReference>
<dbReference type="ChiTaRS" id="oc">
    <property type="organism name" value="fly"/>
</dbReference>
<dbReference type="GenomeRNAi" id="31802"/>
<dbReference type="PRO" id="PR:P22810"/>
<dbReference type="Proteomes" id="UP000000803">
    <property type="component" value="Chromosome X"/>
</dbReference>
<dbReference type="Bgee" id="FBgn0004102">
    <property type="expression patterns" value="Expressed in photoreceptor cell R7 (Drosophila) in insect head and 82 other cell types or tissues"/>
</dbReference>
<dbReference type="ExpressionAtlas" id="P22810">
    <property type="expression patterns" value="baseline and differential"/>
</dbReference>
<dbReference type="GO" id="GO:0005634">
    <property type="term" value="C:nucleus"/>
    <property type="evidence" value="ECO:0000318"/>
    <property type="project" value="GO_Central"/>
</dbReference>
<dbReference type="GO" id="GO:0001228">
    <property type="term" value="F:DNA-binding transcription activator activity, RNA polymerase II-specific"/>
    <property type="evidence" value="ECO:0000314"/>
    <property type="project" value="FlyBase"/>
</dbReference>
<dbReference type="GO" id="GO:0000981">
    <property type="term" value="F:DNA-binding transcription factor activity, RNA polymerase II-specific"/>
    <property type="evidence" value="ECO:0000318"/>
    <property type="project" value="GO_Central"/>
</dbReference>
<dbReference type="GO" id="GO:0046982">
    <property type="term" value="F:protein heterodimerization activity"/>
    <property type="evidence" value="ECO:0000353"/>
    <property type="project" value="FlyBase"/>
</dbReference>
<dbReference type="GO" id="GO:0042803">
    <property type="term" value="F:protein homodimerization activity"/>
    <property type="evidence" value="ECO:0000353"/>
    <property type="project" value="FlyBase"/>
</dbReference>
<dbReference type="GO" id="GO:0000978">
    <property type="term" value="F:RNA polymerase II cis-regulatory region sequence-specific DNA binding"/>
    <property type="evidence" value="ECO:0000318"/>
    <property type="project" value="GO_Central"/>
</dbReference>
<dbReference type="GO" id="GO:0007628">
    <property type="term" value="P:adult walking behavior"/>
    <property type="evidence" value="ECO:0000304"/>
    <property type="project" value="FlyBase"/>
</dbReference>
<dbReference type="GO" id="GO:0035288">
    <property type="term" value="P:anterior head segmentation"/>
    <property type="evidence" value="ECO:0000304"/>
    <property type="project" value="FlyBase"/>
</dbReference>
<dbReference type="GO" id="GO:0007355">
    <property type="term" value="P:anterior region determination"/>
    <property type="evidence" value="ECO:0000304"/>
    <property type="project" value="FlyBase"/>
</dbReference>
<dbReference type="GO" id="GO:0007420">
    <property type="term" value="P:brain development"/>
    <property type="evidence" value="ECO:0000315"/>
    <property type="project" value="FlyBase"/>
</dbReference>
<dbReference type="GO" id="GO:0035284">
    <property type="term" value="P:brain segmentation"/>
    <property type="evidence" value="ECO:0000315"/>
    <property type="project" value="FlyBase"/>
</dbReference>
<dbReference type="GO" id="GO:0007417">
    <property type="term" value="P:central nervous system development"/>
    <property type="evidence" value="ECO:0000315"/>
    <property type="project" value="UniProtKB"/>
</dbReference>
<dbReference type="GO" id="GO:0001745">
    <property type="term" value="P:compound eye morphogenesis"/>
    <property type="evidence" value="ECO:0000315"/>
    <property type="project" value="UniProtKB"/>
</dbReference>
<dbReference type="GO" id="GO:0042051">
    <property type="term" value="P:compound eye photoreceptor development"/>
    <property type="evidence" value="ECO:0000315"/>
    <property type="project" value="FlyBase"/>
</dbReference>
<dbReference type="GO" id="GO:0001700">
    <property type="term" value="P:embryonic development via the syncytial blastoderm"/>
    <property type="evidence" value="ECO:0000315"/>
    <property type="project" value="FlyBase"/>
</dbReference>
<dbReference type="GO" id="GO:0000122">
    <property type="term" value="P:negative regulation of transcription by RNA polymerase II"/>
    <property type="evidence" value="ECO:0000315"/>
    <property type="project" value="FlyBase"/>
</dbReference>
<dbReference type="GO" id="GO:0007399">
    <property type="term" value="P:nervous system development"/>
    <property type="evidence" value="ECO:0000304"/>
    <property type="project" value="FlyBase"/>
</dbReference>
<dbReference type="GO" id="GO:0008056">
    <property type="term" value="P:ocellus development"/>
    <property type="evidence" value="ECO:0000316"/>
    <property type="project" value="FlyBase"/>
</dbReference>
<dbReference type="GO" id="GO:0048816">
    <property type="term" value="P:ocellus morphogenesis"/>
    <property type="evidence" value="ECO:0000303"/>
    <property type="project" value="FlyBase"/>
</dbReference>
<dbReference type="GO" id="GO:0042463">
    <property type="term" value="P:ocellus photoreceptor cell development"/>
    <property type="evidence" value="ECO:0000316"/>
    <property type="project" value="FlyBase"/>
</dbReference>
<dbReference type="GO" id="GO:0007389">
    <property type="term" value="P:pattern specification process"/>
    <property type="evidence" value="ECO:0000303"/>
    <property type="project" value="FlyBase"/>
</dbReference>
<dbReference type="GO" id="GO:0046552">
    <property type="term" value="P:photoreceptor cell fate commitment"/>
    <property type="evidence" value="ECO:0000315"/>
    <property type="project" value="UniProtKB"/>
</dbReference>
<dbReference type="GO" id="GO:0045315">
    <property type="term" value="P:positive regulation of compound eye photoreceptor development"/>
    <property type="evidence" value="ECO:0000315"/>
    <property type="project" value="FlyBase"/>
</dbReference>
<dbReference type="GO" id="GO:0010628">
    <property type="term" value="P:positive regulation of gene expression"/>
    <property type="evidence" value="ECO:0000315"/>
    <property type="project" value="FlyBase"/>
</dbReference>
<dbReference type="GO" id="GO:0045944">
    <property type="term" value="P:positive regulation of transcription by RNA polymerase II"/>
    <property type="evidence" value="ECO:0000314"/>
    <property type="project" value="FlyBase"/>
</dbReference>
<dbReference type="GO" id="GO:0006357">
    <property type="term" value="P:regulation of transcription by RNA polymerase II"/>
    <property type="evidence" value="ECO:0000318"/>
    <property type="project" value="GO_Central"/>
</dbReference>
<dbReference type="GO" id="GO:0042052">
    <property type="term" value="P:rhabdomere development"/>
    <property type="evidence" value="ECO:0000315"/>
    <property type="project" value="UniProtKB"/>
</dbReference>
<dbReference type="GO" id="GO:0061541">
    <property type="term" value="P:rhabdomere morphogenesis"/>
    <property type="evidence" value="ECO:0000315"/>
    <property type="project" value="FlyBase"/>
</dbReference>
<dbReference type="GO" id="GO:0007419">
    <property type="term" value="P:ventral cord development"/>
    <property type="evidence" value="ECO:0000315"/>
    <property type="project" value="FlyBase"/>
</dbReference>
<dbReference type="CDD" id="cd00086">
    <property type="entry name" value="homeodomain"/>
    <property type="match status" value="1"/>
</dbReference>
<dbReference type="FunFam" id="1.10.10.60:FF:000142">
    <property type="entry name" value="homeobox protein OTX2 isoform X2"/>
    <property type="match status" value="1"/>
</dbReference>
<dbReference type="Gene3D" id="1.10.10.60">
    <property type="entry name" value="Homeodomain-like"/>
    <property type="match status" value="1"/>
</dbReference>
<dbReference type="InterPro" id="IPR001356">
    <property type="entry name" value="HD"/>
</dbReference>
<dbReference type="InterPro" id="IPR017970">
    <property type="entry name" value="Homeobox_CS"/>
</dbReference>
<dbReference type="InterPro" id="IPR009057">
    <property type="entry name" value="Homeodomain-like_sf"/>
</dbReference>
<dbReference type="PANTHER" id="PTHR45793">
    <property type="entry name" value="HOMEOBOX PROTEIN"/>
    <property type="match status" value="1"/>
</dbReference>
<dbReference type="PANTHER" id="PTHR45793:SF5">
    <property type="entry name" value="HOMEOTIC PROTEIN OCELLILESS"/>
    <property type="match status" value="1"/>
</dbReference>
<dbReference type="Pfam" id="PF00046">
    <property type="entry name" value="Homeodomain"/>
    <property type="match status" value="1"/>
</dbReference>
<dbReference type="SMART" id="SM00389">
    <property type="entry name" value="HOX"/>
    <property type="match status" value="1"/>
</dbReference>
<dbReference type="SUPFAM" id="SSF46689">
    <property type="entry name" value="Homeodomain-like"/>
    <property type="match status" value="1"/>
</dbReference>
<dbReference type="PROSITE" id="PS00027">
    <property type="entry name" value="HOMEOBOX_1"/>
    <property type="match status" value="1"/>
</dbReference>
<dbReference type="PROSITE" id="PS50071">
    <property type="entry name" value="HOMEOBOX_2"/>
    <property type="match status" value="1"/>
</dbReference>
<gene>
    <name type="primary">oc</name>
    <name type="synonym">Otd</name>
    <name type="ORF">CG12154</name>
</gene>
<protein>
    <recommendedName>
        <fullName>Homeotic protein ocelliless</fullName>
    </recommendedName>
    <alternativeName>
        <fullName>Protein orthodenticle</fullName>
    </alternativeName>
</protein>
<organism>
    <name type="scientific">Drosophila melanogaster</name>
    <name type="common">Fruit fly</name>
    <dbReference type="NCBI Taxonomy" id="7227"/>
    <lineage>
        <taxon>Eukaryota</taxon>
        <taxon>Metazoa</taxon>
        <taxon>Ecdysozoa</taxon>
        <taxon>Arthropoda</taxon>
        <taxon>Hexapoda</taxon>
        <taxon>Insecta</taxon>
        <taxon>Pterygota</taxon>
        <taxon>Neoptera</taxon>
        <taxon>Endopterygota</taxon>
        <taxon>Diptera</taxon>
        <taxon>Brachycera</taxon>
        <taxon>Muscomorpha</taxon>
        <taxon>Ephydroidea</taxon>
        <taxon>Drosophilidae</taxon>
        <taxon>Drosophila</taxon>
        <taxon>Sophophora</taxon>
    </lineage>
</organism>
<comment type="function">
    <text evidence="3 4 5">Transcriptional regulator involved in pattern formation and cell determination in the embryonic CNS and larval imaginal disks. Also later in development to coordinate the expression of regulatory and structural genes required for photoreceptor cell fate in the ocelli. Has a dual role in the terminal differentiation of subtypes of photoreceptors by regulating rhodopsin (rh) expression: essential for establishing the expression of rh genes in the pale subset of ommatidia as well as repressing Rh6 in outer photoreceptors.</text>
</comment>
<comment type="subcellular location">
    <subcellularLocation>
        <location evidence="6">Nucleus</location>
    </subcellularLocation>
</comment>
<comment type="tissue specificity">
    <text evidence="3 4 5">Expressed in the anterior region of the embryo before cellularization and becomes localized to the procephalic head region following gastrulation. These cells correspond to the mesectoderm or midline neuroepithelium and will generate a mixed population of neurons and glia. Expressed in photoreceptors in pupae and adults.</text>
</comment>
<comment type="developmental stage">
    <text evidence="4">Expressed from early embryonic stages through to late pupation.</text>
</comment>
<comment type="domain">
    <text>Contains multiple repeats consisting of single amino acids (e.g. Gly, Ser, His, and Asn) and pairs of amino acids (e.g. Gly-Val).</text>
</comment>
<comment type="disruption phenotype">
    <text evidence="4 5">In embryos, formation of an abnormal neuropil and the disappearance of the horizontal commissures associated with the midline of the CNS. In pupae, misshapen, duplicated, and shortened rhabdomeres within the eye. In adults, deletion of the ocelli.</text>
</comment>
<comment type="similarity">
    <text evidence="6">Belongs to the paired homeobox family.</text>
</comment>
<comment type="sequence caution" evidence="6">
    <conflict type="frameshift">
        <sequence resource="EMBL-CDS" id="CAA41732"/>
    </conflict>
</comment>
<keyword id="KW-0217">Developmental protein</keyword>
<keyword id="KW-0238">DNA-binding</keyword>
<keyword id="KW-0371">Homeobox</keyword>
<keyword id="KW-0539">Nucleus</keyword>
<keyword id="KW-1185">Reference proteome</keyword>
<keyword id="KW-0677">Repeat</keyword>
<keyword id="KW-0804">Transcription</keyword>
<keyword id="KW-0805">Transcription regulation</keyword>
<proteinExistence type="evidence at transcript level"/>
<accession>P22810</accession>
<accession>Q59E69</accession>
<accession>Q6NNU8</accession>
<accession>Q9W3D0</accession>